<evidence type="ECO:0000250" key="1"/>
<evidence type="ECO:0000255" key="2">
    <source>
        <dbReference type="PROSITE-ProRule" id="PRU00042"/>
    </source>
</evidence>
<evidence type="ECO:0000255" key="3">
    <source>
        <dbReference type="PROSITE-ProRule" id="PRU00119"/>
    </source>
</evidence>
<evidence type="ECO:0000256" key="4">
    <source>
        <dbReference type="SAM" id="MobiDB-lite"/>
    </source>
</evidence>
<evidence type="ECO:0000305" key="5"/>
<proteinExistence type="evidence at protein level"/>
<feature type="chain" id="PRO_0000263075" description="Zinc finger protein 782">
    <location>
        <begin position="1"/>
        <end position="699"/>
    </location>
</feature>
<feature type="domain" description="KRAB" evidence="3">
    <location>
        <begin position="8"/>
        <end position="79"/>
    </location>
</feature>
<feature type="zinc finger region" description="C2H2-type 1; degenerate" evidence="2">
    <location>
        <begin position="279"/>
        <end position="307"/>
    </location>
</feature>
<feature type="zinc finger region" description="C2H2-type 2; degenerate" evidence="2">
    <location>
        <begin position="316"/>
        <end position="332"/>
    </location>
</feature>
<feature type="zinc finger region" description="C2H2-type 3; degenerate" evidence="2">
    <location>
        <begin position="337"/>
        <end position="360"/>
    </location>
</feature>
<feature type="zinc finger region" description="C2H2-type 4; degenerate" evidence="2">
    <location>
        <begin position="366"/>
        <end position="388"/>
    </location>
</feature>
<feature type="zinc finger region" description="C2H2-type 5" evidence="2">
    <location>
        <begin position="394"/>
        <end position="416"/>
    </location>
</feature>
<feature type="zinc finger region" description="C2H2-type 6" evidence="2">
    <location>
        <begin position="422"/>
        <end position="444"/>
    </location>
</feature>
<feature type="zinc finger region" description="C2H2-type 7" evidence="2">
    <location>
        <begin position="450"/>
        <end position="472"/>
    </location>
</feature>
<feature type="zinc finger region" description="C2H2-type 8" evidence="2">
    <location>
        <begin position="478"/>
        <end position="500"/>
    </location>
</feature>
<feature type="zinc finger region" description="C2H2-type 9" evidence="2">
    <location>
        <begin position="506"/>
        <end position="528"/>
    </location>
</feature>
<feature type="zinc finger region" description="C2H2-type 10" evidence="2">
    <location>
        <begin position="534"/>
        <end position="556"/>
    </location>
</feature>
<feature type="zinc finger region" description="C2H2-type 11" evidence="2">
    <location>
        <begin position="562"/>
        <end position="584"/>
    </location>
</feature>
<feature type="zinc finger region" description="C2H2-type 12" evidence="2">
    <location>
        <begin position="590"/>
        <end position="612"/>
    </location>
</feature>
<feature type="zinc finger region" description="C2H2-type 13" evidence="2">
    <location>
        <begin position="618"/>
        <end position="640"/>
    </location>
</feature>
<feature type="zinc finger region" description="C2H2-type 14" evidence="2">
    <location>
        <begin position="646"/>
        <end position="668"/>
    </location>
</feature>
<feature type="zinc finger region" description="C2H2-type 15" evidence="2">
    <location>
        <begin position="674"/>
        <end position="696"/>
    </location>
</feature>
<feature type="region of interest" description="Disordered" evidence="4">
    <location>
        <begin position="75"/>
        <end position="95"/>
    </location>
</feature>
<feature type="sequence variant" id="VAR_029578" description="In dbSNP:rs7870376.">
    <original>R</original>
    <variation>P</variation>
    <location>
        <position position="130"/>
    </location>
</feature>
<feature type="sequence variant" id="VAR_029579" description="In dbSNP:rs4645656.">
    <original>R</original>
    <variation>H</variation>
    <location>
        <position position="165"/>
    </location>
</feature>
<feature type="sequence variant" id="VAR_052901" description="In dbSNP:rs34763627.">
    <original>N</original>
    <variation>S</variation>
    <location>
        <position position="246"/>
    </location>
</feature>
<feature type="sequence variant" id="VAR_052902" description="In dbSNP:rs35403084.">
    <original>T</original>
    <variation>A</variation>
    <location>
        <position position="289"/>
    </location>
</feature>
<accession>Q6ZMW2</accession>
<accession>B2RNR0</accession>
<comment type="function">
    <text evidence="1">May be involved in transcriptional regulation.</text>
</comment>
<comment type="subcellular location">
    <subcellularLocation>
        <location evidence="5">Nucleus</location>
    </subcellularLocation>
</comment>
<comment type="similarity">
    <text evidence="5">Belongs to the krueppel C2H2-type zinc-finger protein family.</text>
</comment>
<gene>
    <name type="primary">ZNF782</name>
</gene>
<protein>
    <recommendedName>
        <fullName>Zinc finger protein 782</fullName>
    </recommendedName>
</protein>
<reference key="1">
    <citation type="journal article" date="2004" name="Nat. Genet.">
        <title>Complete sequencing and characterization of 21,243 full-length human cDNAs.</title>
        <authorList>
            <person name="Ota T."/>
            <person name="Suzuki Y."/>
            <person name="Nishikawa T."/>
            <person name="Otsuki T."/>
            <person name="Sugiyama T."/>
            <person name="Irie R."/>
            <person name="Wakamatsu A."/>
            <person name="Hayashi K."/>
            <person name="Sato H."/>
            <person name="Nagai K."/>
            <person name="Kimura K."/>
            <person name="Makita H."/>
            <person name="Sekine M."/>
            <person name="Obayashi M."/>
            <person name="Nishi T."/>
            <person name="Shibahara T."/>
            <person name="Tanaka T."/>
            <person name="Ishii S."/>
            <person name="Yamamoto J."/>
            <person name="Saito K."/>
            <person name="Kawai Y."/>
            <person name="Isono Y."/>
            <person name="Nakamura Y."/>
            <person name="Nagahari K."/>
            <person name="Murakami K."/>
            <person name="Yasuda T."/>
            <person name="Iwayanagi T."/>
            <person name="Wagatsuma M."/>
            <person name="Shiratori A."/>
            <person name="Sudo H."/>
            <person name="Hosoiri T."/>
            <person name="Kaku Y."/>
            <person name="Kodaira H."/>
            <person name="Kondo H."/>
            <person name="Sugawara M."/>
            <person name="Takahashi M."/>
            <person name="Kanda K."/>
            <person name="Yokoi T."/>
            <person name="Furuya T."/>
            <person name="Kikkawa E."/>
            <person name="Omura Y."/>
            <person name="Abe K."/>
            <person name="Kamihara K."/>
            <person name="Katsuta N."/>
            <person name="Sato K."/>
            <person name="Tanikawa M."/>
            <person name="Yamazaki M."/>
            <person name="Ninomiya K."/>
            <person name="Ishibashi T."/>
            <person name="Yamashita H."/>
            <person name="Murakawa K."/>
            <person name="Fujimori K."/>
            <person name="Tanai H."/>
            <person name="Kimata M."/>
            <person name="Watanabe M."/>
            <person name="Hiraoka S."/>
            <person name="Chiba Y."/>
            <person name="Ishida S."/>
            <person name="Ono Y."/>
            <person name="Takiguchi S."/>
            <person name="Watanabe S."/>
            <person name="Yosida M."/>
            <person name="Hotuta T."/>
            <person name="Kusano J."/>
            <person name="Kanehori K."/>
            <person name="Takahashi-Fujii A."/>
            <person name="Hara H."/>
            <person name="Tanase T.-O."/>
            <person name="Nomura Y."/>
            <person name="Togiya S."/>
            <person name="Komai F."/>
            <person name="Hara R."/>
            <person name="Takeuchi K."/>
            <person name="Arita M."/>
            <person name="Imose N."/>
            <person name="Musashino K."/>
            <person name="Yuuki H."/>
            <person name="Oshima A."/>
            <person name="Sasaki N."/>
            <person name="Aotsuka S."/>
            <person name="Yoshikawa Y."/>
            <person name="Matsunawa H."/>
            <person name="Ichihara T."/>
            <person name="Shiohata N."/>
            <person name="Sano S."/>
            <person name="Moriya S."/>
            <person name="Momiyama H."/>
            <person name="Satoh N."/>
            <person name="Takami S."/>
            <person name="Terashima Y."/>
            <person name="Suzuki O."/>
            <person name="Nakagawa S."/>
            <person name="Senoh A."/>
            <person name="Mizoguchi H."/>
            <person name="Goto Y."/>
            <person name="Shimizu F."/>
            <person name="Wakebe H."/>
            <person name="Hishigaki H."/>
            <person name="Watanabe T."/>
            <person name="Sugiyama A."/>
            <person name="Takemoto M."/>
            <person name="Kawakami B."/>
            <person name="Yamazaki M."/>
            <person name="Watanabe K."/>
            <person name="Kumagai A."/>
            <person name="Itakura S."/>
            <person name="Fukuzumi Y."/>
            <person name="Fujimori Y."/>
            <person name="Komiyama M."/>
            <person name="Tashiro H."/>
            <person name="Tanigami A."/>
            <person name="Fujiwara T."/>
            <person name="Ono T."/>
            <person name="Yamada K."/>
            <person name="Fujii Y."/>
            <person name="Ozaki K."/>
            <person name="Hirao M."/>
            <person name="Ohmori Y."/>
            <person name="Kawabata A."/>
            <person name="Hikiji T."/>
            <person name="Kobatake N."/>
            <person name="Inagaki H."/>
            <person name="Ikema Y."/>
            <person name="Okamoto S."/>
            <person name="Okitani R."/>
            <person name="Kawakami T."/>
            <person name="Noguchi S."/>
            <person name="Itoh T."/>
            <person name="Shigeta K."/>
            <person name="Senba T."/>
            <person name="Matsumura K."/>
            <person name="Nakajima Y."/>
            <person name="Mizuno T."/>
            <person name="Morinaga M."/>
            <person name="Sasaki M."/>
            <person name="Togashi T."/>
            <person name="Oyama M."/>
            <person name="Hata H."/>
            <person name="Watanabe M."/>
            <person name="Komatsu T."/>
            <person name="Mizushima-Sugano J."/>
            <person name="Satoh T."/>
            <person name="Shirai Y."/>
            <person name="Takahashi Y."/>
            <person name="Nakagawa K."/>
            <person name="Okumura K."/>
            <person name="Nagase T."/>
            <person name="Nomura N."/>
            <person name="Kikuchi H."/>
            <person name="Masuho Y."/>
            <person name="Yamashita R."/>
            <person name="Nakai K."/>
            <person name="Yada T."/>
            <person name="Nakamura Y."/>
            <person name="Ohara O."/>
            <person name="Isogai T."/>
            <person name="Sugano S."/>
        </authorList>
    </citation>
    <scope>NUCLEOTIDE SEQUENCE [LARGE SCALE MRNA]</scope>
    <source>
        <tissue>Testis</tissue>
    </source>
</reference>
<reference key="2">
    <citation type="submission" date="2005-07" db="EMBL/GenBank/DDBJ databases">
        <authorList>
            <person name="Mural R.J."/>
            <person name="Istrail S."/>
            <person name="Sutton G.G."/>
            <person name="Florea L."/>
            <person name="Halpern A.L."/>
            <person name="Mobarry C.M."/>
            <person name="Lippert R."/>
            <person name="Walenz B."/>
            <person name="Shatkay H."/>
            <person name="Dew I."/>
            <person name="Miller J.R."/>
            <person name="Flanigan M.J."/>
            <person name="Edwards N.J."/>
            <person name="Bolanos R."/>
            <person name="Fasulo D."/>
            <person name="Halldorsson B.V."/>
            <person name="Hannenhalli S."/>
            <person name="Turner R."/>
            <person name="Yooseph S."/>
            <person name="Lu F."/>
            <person name="Nusskern D.R."/>
            <person name="Shue B.C."/>
            <person name="Zheng X.H."/>
            <person name="Zhong F."/>
            <person name="Delcher A.L."/>
            <person name="Huson D.H."/>
            <person name="Kravitz S.A."/>
            <person name="Mouchard L."/>
            <person name="Reinert K."/>
            <person name="Remington K.A."/>
            <person name="Clark A.G."/>
            <person name="Waterman M.S."/>
            <person name="Eichler E.E."/>
            <person name="Adams M.D."/>
            <person name="Hunkapiller M.W."/>
            <person name="Myers E.W."/>
            <person name="Venter J.C."/>
        </authorList>
    </citation>
    <scope>NUCLEOTIDE SEQUENCE [LARGE SCALE GENOMIC DNA]</scope>
</reference>
<reference key="3">
    <citation type="journal article" date="2004" name="Genome Res.">
        <title>The status, quality, and expansion of the NIH full-length cDNA project: the Mammalian Gene Collection (MGC).</title>
        <authorList>
            <consortium name="The MGC Project Team"/>
        </authorList>
    </citation>
    <scope>NUCLEOTIDE SEQUENCE [LARGE SCALE MRNA]</scope>
    <source>
        <tissue>Lung</tissue>
    </source>
</reference>
<dbReference type="EMBL" id="AK131468">
    <property type="protein sequence ID" value="BAD18613.1"/>
    <property type="molecule type" value="mRNA"/>
</dbReference>
<dbReference type="EMBL" id="CH471174">
    <property type="protein sequence ID" value="EAW92667.1"/>
    <property type="molecule type" value="Genomic_DNA"/>
</dbReference>
<dbReference type="EMBL" id="BC137073">
    <property type="protein sequence ID" value="AAI37074.1"/>
    <property type="molecule type" value="mRNA"/>
</dbReference>
<dbReference type="CCDS" id="CCDS35075.1"/>
<dbReference type="RefSeq" id="NP_001001662.1">
    <property type="nucleotide sequence ID" value="NM_001001662.3"/>
</dbReference>
<dbReference type="RefSeq" id="NP_001333920.1">
    <property type="nucleotide sequence ID" value="NM_001346991.2"/>
</dbReference>
<dbReference type="RefSeq" id="XP_011516617.1">
    <property type="nucleotide sequence ID" value="XM_011518315.3"/>
</dbReference>
<dbReference type="RefSeq" id="XP_011516620.1">
    <property type="nucleotide sequence ID" value="XM_011518318.4"/>
</dbReference>
<dbReference type="RefSeq" id="XP_047278826.1">
    <property type="nucleotide sequence ID" value="XM_047422870.1"/>
</dbReference>
<dbReference type="SMR" id="Q6ZMW2"/>
<dbReference type="BioGRID" id="127682">
    <property type="interactions" value="38"/>
</dbReference>
<dbReference type="FunCoup" id="Q6ZMW2">
    <property type="interactions" value="40"/>
</dbReference>
<dbReference type="STRING" id="9606.ENSP00000419397"/>
<dbReference type="GlyGen" id="Q6ZMW2">
    <property type="glycosylation" value="1 site, 1 O-linked glycan (1 site)"/>
</dbReference>
<dbReference type="iPTMnet" id="Q6ZMW2"/>
<dbReference type="PhosphoSitePlus" id="Q6ZMW2"/>
<dbReference type="BioMuta" id="ZNF782"/>
<dbReference type="DMDM" id="74758686"/>
<dbReference type="jPOST" id="Q6ZMW2"/>
<dbReference type="MassIVE" id="Q6ZMW2"/>
<dbReference type="PaxDb" id="9606-ENSP00000419397"/>
<dbReference type="PeptideAtlas" id="Q6ZMW2"/>
<dbReference type="ProteomicsDB" id="67928"/>
<dbReference type="Antibodypedia" id="1843">
    <property type="antibodies" value="69 antibodies from 15 providers"/>
</dbReference>
<dbReference type="DNASU" id="158431"/>
<dbReference type="Ensembl" id="ENST00000481138.6">
    <property type="protein sequence ID" value="ENSP00000419397.1"/>
    <property type="gene ID" value="ENSG00000196597.13"/>
</dbReference>
<dbReference type="Ensembl" id="ENST00000535338.5">
    <property type="protein sequence ID" value="ENSP00000440624.2"/>
    <property type="gene ID" value="ENSG00000196597.13"/>
</dbReference>
<dbReference type="GeneID" id="158431"/>
<dbReference type="KEGG" id="hsa:158431"/>
<dbReference type="MANE-Select" id="ENST00000481138.6">
    <property type="protein sequence ID" value="ENSP00000419397.1"/>
    <property type="RefSeq nucleotide sequence ID" value="NM_001001662.3"/>
    <property type="RefSeq protein sequence ID" value="NP_001001662.1"/>
</dbReference>
<dbReference type="UCSC" id="uc004awp.2">
    <property type="organism name" value="human"/>
</dbReference>
<dbReference type="AGR" id="HGNC:33110"/>
<dbReference type="CTD" id="158431"/>
<dbReference type="GeneCards" id="ZNF782"/>
<dbReference type="HGNC" id="HGNC:33110">
    <property type="gene designation" value="ZNF782"/>
</dbReference>
<dbReference type="HPA" id="ENSG00000196597">
    <property type="expression patterns" value="Low tissue specificity"/>
</dbReference>
<dbReference type="neXtProt" id="NX_Q6ZMW2"/>
<dbReference type="OpenTargets" id="ENSG00000196597"/>
<dbReference type="PharmGKB" id="PA162410440"/>
<dbReference type="VEuPathDB" id="HostDB:ENSG00000196597"/>
<dbReference type="eggNOG" id="KOG1721">
    <property type="taxonomic scope" value="Eukaryota"/>
</dbReference>
<dbReference type="GeneTree" id="ENSGT00940000163051"/>
<dbReference type="HOGENOM" id="CLU_002678_17_1_1"/>
<dbReference type="InParanoid" id="Q6ZMW2"/>
<dbReference type="OMA" id="TSCLIQP"/>
<dbReference type="OrthoDB" id="427030at2759"/>
<dbReference type="PAN-GO" id="Q6ZMW2">
    <property type="GO annotations" value="4 GO annotations based on evolutionary models"/>
</dbReference>
<dbReference type="PhylomeDB" id="Q6ZMW2"/>
<dbReference type="TreeFam" id="TF350803"/>
<dbReference type="PathwayCommons" id="Q6ZMW2"/>
<dbReference type="Reactome" id="R-HSA-212436">
    <property type="pathway name" value="Generic Transcription Pathway"/>
</dbReference>
<dbReference type="BioGRID-ORCS" id="158431">
    <property type="hits" value="15 hits in 1182 CRISPR screens"/>
</dbReference>
<dbReference type="ChiTaRS" id="ZNF782">
    <property type="organism name" value="human"/>
</dbReference>
<dbReference type="GenomeRNAi" id="158431"/>
<dbReference type="Pharos" id="Q6ZMW2">
    <property type="development level" value="Tdark"/>
</dbReference>
<dbReference type="PRO" id="PR:Q6ZMW2"/>
<dbReference type="Proteomes" id="UP000005640">
    <property type="component" value="Chromosome 9"/>
</dbReference>
<dbReference type="RNAct" id="Q6ZMW2">
    <property type="molecule type" value="protein"/>
</dbReference>
<dbReference type="Bgee" id="ENSG00000196597">
    <property type="expression patterns" value="Expressed in sural nerve and 122 other cell types or tissues"/>
</dbReference>
<dbReference type="ExpressionAtlas" id="Q6ZMW2">
    <property type="expression patterns" value="baseline and differential"/>
</dbReference>
<dbReference type="GO" id="GO:0005634">
    <property type="term" value="C:nucleus"/>
    <property type="evidence" value="ECO:0000318"/>
    <property type="project" value="GO_Central"/>
</dbReference>
<dbReference type="GO" id="GO:0003677">
    <property type="term" value="F:DNA binding"/>
    <property type="evidence" value="ECO:0007669"/>
    <property type="project" value="UniProtKB-KW"/>
</dbReference>
<dbReference type="GO" id="GO:0008270">
    <property type="term" value="F:zinc ion binding"/>
    <property type="evidence" value="ECO:0007669"/>
    <property type="project" value="UniProtKB-KW"/>
</dbReference>
<dbReference type="GO" id="GO:0006357">
    <property type="term" value="P:regulation of transcription by RNA polymerase II"/>
    <property type="evidence" value="ECO:0000318"/>
    <property type="project" value="GO_Central"/>
</dbReference>
<dbReference type="CDD" id="cd07765">
    <property type="entry name" value="KRAB_A-box"/>
    <property type="match status" value="1"/>
</dbReference>
<dbReference type="FunFam" id="3.30.160.60:FF:002343">
    <property type="entry name" value="Zinc finger protein 33A"/>
    <property type="match status" value="3"/>
</dbReference>
<dbReference type="FunFam" id="3.30.160.60:FF:000016">
    <property type="entry name" value="zinc finger protein 37 homolog"/>
    <property type="match status" value="3"/>
</dbReference>
<dbReference type="FunFam" id="3.30.160.60:FF:001498">
    <property type="entry name" value="Zinc finger protein 404"/>
    <property type="match status" value="1"/>
</dbReference>
<dbReference type="FunFam" id="3.30.160.60:FF:002254">
    <property type="entry name" value="Zinc finger protein 540"/>
    <property type="match status" value="2"/>
</dbReference>
<dbReference type="FunFam" id="3.30.160.60:FF:001437">
    <property type="entry name" value="Zinc finger protein 594"/>
    <property type="match status" value="1"/>
</dbReference>
<dbReference type="FunFam" id="3.30.160.60:FF:002357">
    <property type="entry name" value="Zinc finger protein 782"/>
    <property type="match status" value="1"/>
</dbReference>
<dbReference type="FunFam" id="3.30.160.60:FF:000028">
    <property type="entry name" value="zinc finger protein 90 homolog"/>
    <property type="match status" value="1"/>
</dbReference>
<dbReference type="Gene3D" id="6.10.140.140">
    <property type="match status" value="1"/>
</dbReference>
<dbReference type="Gene3D" id="3.30.160.60">
    <property type="entry name" value="Classic Zinc Finger"/>
    <property type="match status" value="14"/>
</dbReference>
<dbReference type="InterPro" id="IPR001909">
    <property type="entry name" value="KRAB"/>
</dbReference>
<dbReference type="InterPro" id="IPR036051">
    <property type="entry name" value="KRAB_dom_sf"/>
</dbReference>
<dbReference type="InterPro" id="IPR036236">
    <property type="entry name" value="Znf_C2H2_sf"/>
</dbReference>
<dbReference type="InterPro" id="IPR013087">
    <property type="entry name" value="Znf_C2H2_type"/>
</dbReference>
<dbReference type="PANTHER" id="PTHR23235">
    <property type="entry name" value="KRUEPPEL-LIKE TRANSCRIPTION FACTOR"/>
    <property type="match status" value="1"/>
</dbReference>
<dbReference type="PANTHER" id="PTHR23235:SF142">
    <property type="entry name" value="ZINC FINGER PROTEIN 384"/>
    <property type="match status" value="1"/>
</dbReference>
<dbReference type="Pfam" id="PF01352">
    <property type="entry name" value="KRAB"/>
    <property type="match status" value="1"/>
</dbReference>
<dbReference type="Pfam" id="PF00096">
    <property type="entry name" value="zf-C2H2"/>
    <property type="match status" value="11"/>
</dbReference>
<dbReference type="SMART" id="SM00349">
    <property type="entry name" value="KRAB"/>
    <property type="match status" value="1"/>
</dbReference>
<dbReference type="SMART" id="SM00355">
    <property type="entry name" value="ZnF_C2H2"/>
    <property type="match status" value="13"/>
</dbReference>
<dbReference type="SUPFAM" id="SSF57667">
    <property type="entry name" value="beta-beta-alpha zinc fingers"/>
    <property type="match status" value="8"/>
</dbReference>
<dbReference type="SUPFAM" id="SSF109640">
    <property type="entry name" value="KRAB domain (Kruppel-associated box)"/>
    <property type="match status" value="1"/>
</dbReference>
<dbReference type="PROSITE" id="PS50805">
    <property type="entry name" value="KRAB"/>
    <property type="match status" value="1"/>
</dbReference>
<dbReference type="PROSITE" id="PS00028">
    <property type="entry name" value="ZINC_FINGER_C2H2_1"/>
    <property type="match status" value="11"/>
</dbReference>
<dbReference type="PROSITE" id="PS50157">
    <property type="entry name" value="ZINC_FINGER_C2H2_2"/>
    <property type="match status" value="14"/>
</dbReference>
<name>ZN782_HUMAN</name>
<keyword id="KW-0238">DNA-binding</keyword>
<keyword id="KW-0479">Metal-binding</keyword>
<keyword id="KW-0539">Nucleus</keyword>
<keyword id="KW-1267">Proteomics identification</keyword>
<keyword id="KW-1185">Reference proteome</keyword>
<keyword id="KW-0677">Repeat</keyword>
<keyword id="KW-0804">Transcription</keyword>
<keyword id="KW-0805">Transcription regulation</keyword>
<keyword id="KW-0862">Zinc</keyword>
<keyword id="KW-0863">Zinc-finger</keyword>
<organism>
    <name type="scientific">Homo sapiens</name>
    <name type="common">Human</name>
    <dbReference type="NCBI Taxonomy" id="9606"/>
    <lineage>
        <taxon>Eukaryota</taxon>
        <taxon>Metazoa</taxon>
        <taxon>Chordata</taxon>
        <taxon>Craniata</taxon>
        <taxon>Vertebrata</taxon>
        <taxon>Euteleostomi</taxon>
        <taxon>Mammalia</taxon>
        <taxon>Eutheria</taxon>
        <taxon>Euarchontoglires</taxon>
        <taxon>Primates</taxon>
        <taxon>Haplorrhini</taxon>
        <taxon>Catarrhini</taxon>
        <taxon>Hominidae</taxon>
        <taxon>Homo</taxon>
    </lineage>
</organism>
<sequence>MNTFQASVSFQDVTVEFSQEEWQHMGPVERTLYRDVMLENYSHLVSVGYCFTKPELIFTLEQGEDPWLLEKEKGFLSRNSPEDSQPDEISEKSPENQGKHLLQVLFTNKLLTTEQEISGKPHNRDINIFRARMMPCKCDIAGSACQGLSLMAPHCQYSKEKAHERNVCDKWLISIKDGRTNTQEKSFAYSKIVKTLHHKEEVIQHQTIQTLGQDFEYNESRKAFLEKAALVTSNSTHPKGKSYNFNKFGENKYDKSTFIIPQNMNPEKSHYEFNDTGNCFCRITHKTLTGGKSFSQKSHIREHHRVHIGVKPFEYGKSFNRNSTLPVHQRTHATDKYSDYHPCTETFSYQSTFSVHQKVHIRAKPYEYNECGKSCSMNSHLIWPQKSHTGEKPYECPECGKAFSEKSRLRKHQRTHTGEKPYKCDGCDKAFSAKSGLRIHQRTHTGEKPFECHECGKSFNYKSILIVHQRTHTGEKPFECNECGKSFSHMSGLRNHRRTHTGERPYKCDECGKAFKLKSGLRKHHRTHTGEKPYKCNQCGKAFGQKSQLRGHHRIHTGEKPYKCNHCGEAFSQKSNLRVHHRTHTGEKPYQCEECGKTFRQKSNLRGHQRTHTGEKPYECNECGKAFSEKSVLRKHQRTHTGEKPYNCNQCGEAFSQKSNLRVHQRTHTGEKPYKCDKCGRTFSQKSSLREHQKAHPGD</sequence>